<evidence type="ECO:0000255" key="1">
    <source>
        <dbReference type="PROSITE-ProRule" id="PRU01210"/>
    </source>
</evidence>
<evidence type="ECO:0000269" key="2">
    <source>
    </source>
</evidence>
<evidence type="ECO:0000305" key="3"/>
<evidence type="ECO:0007829" key="4">
    <source>
        <dbReference type="PDB" id="1SNB"/>
    </source>
</evidence>
<dbReference type="PDB" id="1SNB">
    <property type="method" value="X-ray"/>
    <property type="resolution" value="1.90 A"/>
    <property type="chains" value="A=1-64"/>
</dbReference>
<dbReference type="PDBsum" id="1SNB"/>
<dbReference type="SMR" id="P54135"/>
<dbReference type="EvolutionaryTrace" id="P54135"/>
<dbReference type="GO" id="GO:0005576">
    <property type="term" value="C:extracellular region"/>
    <property type="evidence" value="ECO:0007669"/>
    <property type="project" value="UniProtKB-SubCell"/>
</dbReference>
<dbReference type="GO" id="GO:0019871">
    <property type="term" value="F:sodium channel inhibitor activity"/>
    <property type="evidence" value="ECO:0007669"/>
    <property type="project" value="InterPro"/>
</dbReference>
<dbReference type="GO" id="GO:0090729">
    <property type="term" value="F:toxin activity"/>
    <property type="evidence" value="ECO:0007669"/>
    <property type="project" value="UniProtKB-KW"/>
</dbReference>
<dbReference type="GO" id="GO:0006952">
    <property type="term" value="P:defense response"/>
    <property type="evidence" value="ECO:0007669"/>
    <property type="project" value="InterPro"/>
</dbReference>
<dbReference type="CDD" id="cd23106">
    <property type="entry name" value="neurotoxins_LC_scorpion"/>
    <property type="match status" value="1"/>
</dbReference>
<dbReference type="Gene3D" id="3.30.30.10">
    <property type="entry name" value="Knottin, scorpion toxin-like"/>
    <property type="match status" value="1"/>
</dbReference>
<dbReference type="InterPro" id="IPR044062">
    <property type="entry name" value="LCN-type_CS_alpha_beta_dom"/>
</dbReference>
<dbReference type="InterPro" id="IPR003614">
    <property type="entry name" value="Scorpion_toxin-like"/>
</dbReference>
<dbReference type="InterPro" id="IPR036574">
    <property type="entry name" value="Scorpion_toxin-like_sf"/>
</dbReference>
<dbReference type="InterPro" id="IPR018218">
    <property type="entry name" value="Scorpion_toxinL"/>
</dbReference>
<dbReference type="InterPro" id="IPR002061">
    <property type="entry name" value="Scorpion_toxinL/defensin"/>
</dbReference>
<dbReference type="Pfam" id="PF00537">
    <property type="entry name" value="Toxin_3"/>
    <property type="match status" value="1"/>
</dbReference>
<dbReference type="PRINTS" id="PR00285">
    <property type="entry name" value="SCORPNTOXIN"/>
</dbReference>
<dbReference type="SMART" id="SM00505">
    <property type="entry name" value="Knot1"/>
    <property type="match status" value="1"/>
</dbReference>
<dbReference type="SUPFAM" id="SSF57095">
    <property type="entry name" value="Scorpion toxin-like"/>
    <property type="match status" value="1"/>
</dbReference>
<dbReference type="PROSITE" id="PS51863">
    <property type="entry name" value="LCN_CSAB"/>
    <property type="match status" value="1"/>
</dbReference>
<comment type="function">
    <text>Alpha toxins bind voltage-independently at site-3 of sodium channels (Nav) and inhibit the inactivation of the activated channels, thereby blocking neuronal transmission. This acidic toxin has a weak toxicity and is active against mammals.</text>
</comment>
<comment type="subcellular location">
    <subcellularLocation>
        <location>Secreted</location>
    </subcellularLocation>
</comment>
<comment type="tissue specificity">
    <text>Expressed by the venom gland.</text>
</comment>
<comment type="domain">
    <text evidence="3">Has the structural arrangement of an alpha-helix connected to antiparallel beta-sheets by disulfide bonds (CS-alpha/beta).</text>
</comment>
<comment type="toxic dose">
    <text evidence="2">LD(50) is 10 mg/kg by intravenous injection into mice.</text>
</comment>
<comment type="similarity">
    <text evidence="3">Belongs to the long (4 C-C) scorpion toxin superfamily. Sodium channel inhibitor family. Alpha subfamily.</text>
</comment>
<protein>
    <recommendedName>
        <fullName>Alpha-mammal toxin BmK-M8</fullName>
        <shortName>BmK8</shortName>
        <shortName>Bmk M8</shortName>
    </recommendedName>
    <alternativeName>
        <fullName>BmK-VIII</fullName>
        <shortName>BmKVIII</shortName>
    </alternativeName>
</protein>
<keyword id="KW-0002">3D-structure</keyword>
<keyword id="KW-0903">Direct protein sequencing</keyword>
<keyword id="KW-1015">Disulfide bond</keyword>
<keyword id="KW-0872">Ion channel impairing toxin</keyword>
<keyword id="KW-0528">Neurotoxin</keyword>
<keyword id="KW-0964">Secreted</keyword>
<keyword id="KW-0800">Toxin</keyword>
<keyword id="KW-0738">Voltage-gated sodium channel impairing toxin</keyword>
<sequence>GRDAYIADSENCTYFCGSNPYCNDVCTENGAKSGYCQWAGRYGNACYCIDLPASERIKEPGKCG</sequence>
<name>SCX8_OLIMR</name>
<accession>P54135</accession>
<proteinExistence type="evidence at protein level"/>
<feature type="chain" id="PRO_0000066753" description="Alpha-mammal toxin BmK-M8">
    <location>
        <begin position="1"/>
        <end position="64"/>
    </location>
</feature>
<feature type="domain" description="LCN-type CS-alpha/beta" evidence="1">
    <location>
        <begin position="2"/>
        <end position="64"/>
    </location>
</feature>
<feature type="disulfide bond" evidence="1 2">
    <location>
        <begin position="12"/>
        <end position="63"/>
    </location>
</feature>
<feature type="disulfide bond" evidence="1 2">
    <location>
        <begin position="16"/>
        <end position="36"/>
    </location>
</feature>
<feature type="disulfide bond" evidence="1 2">
    <location>
        <begin position="22"/>
        <end position="46"/>
    </location>
</feature>
<feature type="disulfide bond" evidence="1 2">
    <location>
        <begin position="26"/>
        <end position="48"/>
    </location>
</feature>
<feature type="strand" evidence="4">
    <location>
        <begin position="2"/>
        <end position="6"/>
    </location>
</feature>
<feature type="helix" evidence="4">
    <location>
        <begin position="19"/>
        <end position="28"/>
    </location>
</feature>
<feature type="strand" evidence="4">
    <location>
        <begin position="32"/>
        <end position="40"/>
    </location>
</feature>
<feature type="strand" evidence="4">
    <location>
        <begin position="43"/>
        <end position="51"/>
    </location>
</feature>
<reference key="1">
    <citation type="journal article" date="1996" name="J. Mol. Biol.">
        <title>Crystal structure of an acidic neurotoxin from scorpion Buthus martensii Karsch at 1.85-A resolution.</title>
        <authorList>
            <person name="Li H.-M."/>
            <person name="Wang D.-C."/>
            <person name="Zeng Z.-H."/>
            <person name="Jin L."/>
            <person name="Hu R.-Q."/>
        </authorList>
    </citation>
    <scope>PROTEIN SEQUENCE</scope>
    <scope>X-RAY CRYSTALLOGRAPHY (1.85 ANGSTROMS)</scope>
    <scope>DISULFIDE BONDS</scope>
    <scope>TOXIC DOSE</scope>
</reference>
<reference key="2">
    <citation type="journal article" date="1999" name="Acta Crystallogr. D">
        <title>A series of bioactivity-variant neurotoxins from scorpion Buthus martensii Karsch: purification, crystallization and crystallographic analysis.</title>
        <authorList>
            <person name="Li H.-M."/>
            <person name="Zhao T."/>
            <person name="Jin L."/>
            <person name="Wang M."/>
            <person name="Zhang Y."/>
            <person name="Wang D.-C."/>
        </authorList>
    </citation>
    <scope>CRYSTALLIZATION</scope>
    <source>
        <tissue>Venom</tissue>
    </source>
</reference>
<organism>
    <name type="scientific">Olivierus martensii</name>
    <name type="common">Manchurian scorpion</name>
    <name type="synonym">Mesobuthus martensii</name>
    <dbReference type="NCBI Taxonomy" id="34649"/>
    <lineage>
        <taxon>Eukaryota</taxon>
        <taxon>Metazoa</taxon>
        <taxon>Ecdysozoa</taxon>
        <taxon>Arthropoda</taxon>
        <taxon>Chelicerata</taxon>
        <taxon>Arachnida</taxon>
        <taxon>Scorpiones</taxon>
        <taxon>Buthida</taxon>
        <taxon>Buthoidea</taxon>
        <taxon>Buthidae</taxon>
        <taxon>Olivierus</taxon>
    </lineage>
</organism>